<keyword id="KW-0378">Hydrolase</keyword>
<keyword id="KW-1277">Toxin-antitoxin system</keyword>
<proteinExistence type="evidence at protein level"/>
<organism>
    <name type="scientific">Mycobacterium bovis (strain BCG / Pasteur 1173P2)</name>
    <dbReference type="NCBI Taxonomy" id="410289"/>
    <lineage>
        <taxon>Bacteria</taxon>
        <taxon>Bacillati</taxon>
        <taxon>Actinomycetota</taxon>
        <taxon>Actinomycetes</taxon>
        <taxon>Mycobacteriales</taxon>
        <taxon>Mycobacteriaceae</taxon>
        <taxon>Mycobacterium</taxon>
        <taxon>Mycobacterium tuberculosis complex</taxon>
    </lineage>
</organism>
<sequence length="352" mass="38563">MITYGSGDLLRADTEALVNTVNCVGVMGKGIALQFKRRYPEMFTAYEKACKRGEVTIGKMFVVDTGQLDGPKHIINFPTKKHWRAPSKLAYIDAGLIDLIRVIRELNIASVAVPPLGVGNGGLDWEDVEQRLVSAFQQLPDVDAVIYPPSGGSRAIEGVEGLRMTWGRAVILEAMRRYLQQRRAMEPWEDPAGISHLEIQKLMYFANEADPDLALDFTPGRYGPYSERVRHLLQGMEGAFTVGLGDGTARVLANQPISLTTKGTDAITDYLATDAAADRVSAAVDTVLRVIEGFEGPYGVELLASTHWVATREGAKEPATAAAAVRKWTKRKGRIYSDDRIGVALDRILMTA</sequence>
<gene>
    <name evidence="5" type="primary">darG</name>
    <name evidence="7" type="ordered locus">BCG_0091</name>
</gene>
<protein>
    <recommendedName>
        <fullName evidence="5">DNA ADP-ribosyl glycohydrolase</fullName>
        <shortName evidence="5">DarG</shortName>
        <ecNumber evidence="1">3.2.2.-</ecNumber>
    </recommendedName>
    <alternativeName>
        <fullName evidence="5">Antitoxin DarG</fullName>
    </alternativeName>
</protein>
<comment type="function">
    <text evidence="1">Antitoxin component of the hybrid type II/IV toxin-antitoxin (TA) system DarTG, which plays a crucial role in controlling bacterial growth and bacteriophage infection. De-ADP-ribosylates DNA (probably) modified on thymidine by its cognate toxin DarT, which neutralizes the activity of cognate toxin DarT.</text>
</comment>
<comment type="catalytic activity">
    <reaction>
        <text>an N-(ADP-alpha-D-ribosyl)-thymidine in DNA + H2O = a thymidine in DNA + ADP-D-ribose</text>
        <dbReference type="Rhea" id="RHEA:71655"/>
        <dbReference type="Rhea" id="RHEA-COMP:13556"/>
        <dbReference type="Rhea" id="RHEA-COMP:18051"/>
        <dbReference type="ChEBI" id="CHEBI:15377"/>
        <dbReference type="ChEBI" id="CHEBI:57967"/>
        <dbReference type="ChEBI" id="CHEBI:137386"/>
        <dbReference type="ChEBI" id="CHEBI:191199"/>
    </reaction>
    <physiologicalReaction direction="left-to-right" evidence="1">
        <dbReference type="Rhea" id="RHEA:71656"/>
    </physiologicalReaction>
</comment>
<comment type="subunit">
    <text evidence="1">Interacts (via C-terminus) with cognate toxin DarT; this heterodimeric complex neutralizes the toxic effect of DarT by preventing ssDNA binding to DarT and consequently inactivating the toxin by direct protein-protein interactions.</text>
</comment>
<comment type="induction">
    <text evidence="4">By DNA damage (mitomycin C) as well as by darT overexpression.</text>
</comment>
<comment type="domain">
    <text evidence="1">The N-terminus macro domain alone is sufficient to neutralize DarT from non-cognate T.aquaticus in E.coli, DarT in M.bovis, and to de-ADP-ribosylate DNA in vitro (By similarity). The C-terminus is a region interacting with the DarT toxin ssDNA binding region (By similarity).</text>
</comment>
<comment type="disruption phenotype">
    <text evidence="4">Knock-down of darG expression leads to increased ADP-ribosylation of genomic DNA by DarT and induction of the DNA damage response including recA, dnaB and dnaE2; darT and darG are also induced.</text>
</comment>
<comment type="similarity">
    <text evidence="6">Belongs to the DarG ADP-ribosyl glycohydrolase family.</text>
</comment>
<name>DARG_MYCBP</name>
<dbReference type="EC" id="3.2.2.-" evidence="1"/>
<dbReference type="EMBL" id="AM408590">
    <property type="protein sequence ID" value="CAL70075.1"/>
    <property type="molecule type" value="Genomic_DNA"/>
</dbReference>
<dbReference type="RefSeq" id="WP_003400551.1">
    <property type="nucleotide sequence ID" value="NC_008769.1"/>
</dbReference>
<dbReference type="SMR" id="A0A0H3M776"/>
<dbReference type="GeneID" id="45424019"/>
<dbReference type="KEGG" id="mbb:BCG_0091"/>
<dbReference type="HOGENOM" id="CLU_049707_0_0_11"/>
<dbReference type="Proteomes" id="UP000001472">
    <property type="component" value="Chromosome"/>
</dbReference>
<dbReference type="GO" id="GO:0016787">
    <property type="term" value="F:hydrolase activity"/>
    <property type="evidence" value="ECO:0007669"/>
    <property type="project" value="UniProtKB-KW"/>
</dbReference>
<dbReference type="GO" id="GO:0140291">
    <property type="term" value="P:peptidyl-glutamate ADP-deribosylation"/>
    <property type="evidence" value="ECO:0007669"/>
    <property type="project" value="TreeGrafter"/>
</dbReference>
<dbReference type="CDD" id="cd02901">
    <property type="entry name" value="Macro_Poa1p-like"/>
    <property type="match status" value="1"/>
</dbReference>
<dbReference type="Gene3D" id="3.40.220.10">
    <property type="entry name" value="Leucine Aminopeptidase, subunit E, domain 1"/>
    <property type="match status" value="1"/>
</dbReference>
<dbReference type="InterPro" id="IPR050892">
    <property type="entry name" value="ADP-ribose_metab_enzymes"/>
</dbReference>
<dbReference type="InterPro" id="IPR002589">
    <property type="entry name" value="Macro_dom"/>
</dbReference>
<dbReference type="InterPro" id="IPR043472">
    <property type="entry name" value="Macro_dom-like"/>
</dbReference>
<dbReference type="PANTHER" id="PTHR12521:SF0">
    <property type="entry name" value="ADP-RIBOSE GLYCOHYDROLASE OARD1"/>
    <property type="match status" value="1"/>
</dbReference>
<dbReference type="PANTHER" id="PTHR12521">
    <property type="entry name" value="PROTEIN C6ORF130"/>
    <property type="match status" value="1"/>
</dbReference>
<dbReference type="Pfam" id="PF01661">
    <property type="entry name" value="Macro"/>
    <property type="match status" value="1"/>
</dbReference>
<dbReference type="SMART" id="SM00506">
    <property type="entry name" value="A1pp"/>
    <property type="match status" value="1"/>
</dbReference>
<dbReference type="SUPFAM" id="SSF52949">
    <property type="entry name" value="Macro domain-like"/>
    <property type="match status" value="1"/>
</dbReference>
<dbReference type="PROSITE" id="PS51154">
    <property type="entry name" value="MACRO"/>
    <property type="match status" value="1"/>
</dbReference>
<accession>A0A0H3M776</accession>
<reference evidence="7" key="1">
    <citation type="journal article" date="2007" name="Proc. Natl. Acad. Sci. U.S.A.">
        <title>Genome plasticity of BCG and impact on vaccine efficacy.</title>
        <authorList>
            <person name="Brosch R."/>
            <person name="Gordon S.V."/>
            <person name="Garnier T."/>
            <person name="Eiglmeier K."/>
            <person name="Frigui W."/>
            <person name="Valenti P."/>
            <person name="Dos Santos S."/>
            <person name="Duthoy S."/>
            <person name="Lacroix C."/>
            <person name="Garcia-Pelayo C."/>
            <person name="Inwald J.K."/>
            <person name="Golby P."/>
            <person name="Garcia J.N."/>
            <person name="Hewinson R.G."/>
            <person name="Behr M.A."/>
            <person name="Quail M.A."/>
            <person name="Churcher C."/>
            <person name="Barrell B.G."/>
            <person name="Parkhill J."/>
            <person name="Cole S.T."/>
        </authorList>
    </citation>
    <scope>NUCLEOTIDE SEQUENCE [LARGE SCALE GENOMIC DNA]</scope>
    <source>
        <strain>BCG / Pasteur 1173P2</strain>
    </source>
</reference>
<reference key="2">
    <citation type="journal article" date="2021" name="Nature">
        <title>Molecular basis for DarT ADP-ribosylation of a DNA base.</title>
        <authorList>
            <person name="Schuller M."/>
            <person name="Butler R.E."/>
            <person name="Ariza A."/>
            <person name="Tromans-Coia C."/>
            <person name="Jankevicius G."/>
            <person name="Claridge T.D.W."/>
            <person name="Kendall S.L."/>
            <person name="Goh S."/>
            <person name="Stewart G.R."/>
            <person name="Ahel I."/>
        </authorList>
    </citation>
    <scope>FUNCTION AS AN ANTITOXIN</scope>
    <scope>INDUCTION BY DNA DAMAGE</scope>
    <scope>DISRUPTION PHENOTYPE</scope>
    <source>
        <strain>BCG</strain>
    </source>
</reference>
<evidence type="ECO:0000250" key="1">
    <source>
        <dbReference type="UniProtKB" id="O53605"/>
    </source>
</evidence>
<evidence type="ECO:0000250" key="2">
    <source>
        <dbReference type="UniProtKB" id="P0DV57"/>
    </source>
</evidence>
<evidence type="ECO:0000255" key="3">
    <source>
        <dbReference type="PROSITE-ProRule" id="PRU00490"/>
    </source>
</evidence>
<evidence type="ECO:0000269" key="4">
    <source>
    </source>
</evidence>
<evidence type="ECO:0000303" key="5">
    <source>
    </source>
</evidence>
<evidence type="ECO:0000305" key="6"/>
<evidence type="ECO:0000312" key="7">
    <source>
        <dbReference type="EMBL" id="CAL70075.1"/>
    </source>
</evidence>
<feature type="chain" id="PRO_0000456045" description="DNA ADP-ribosyl glycohydrolase">
    <location>
        <begin position="1"/>
        <end position="352"/>
    </location>
</feature>
<feature type="domain" description="Macro" evidence="3">
    <location>
        <begin position="1"/>
        <end position="155"/>
    </location>
</feature>
<feature type="region of interest" description="Interaction with DarT" evidence="1">
    <location>
        <begin position="164"/>
        <end position="352"/>
    </location>
</feature>
<feature type="active site" description="Nucleophile" evidence="2">
    <location>
        <position position="80"/>
    </location>
</feature>
<feature type="binding site" evidence="2">
    <location>
        <begin position="8"/>
        <end position="9"/>
    </location>
    <ligand>
        <name>ADP-D-ribose</name>
        <dbReference type="ChEBI" id="CHEBI:57967"/>
    </ligand>
</feature>
<feature type="binding site" evidence="2">
    <location>
        <begin position="20"/>
        <end position="22"/>
    </location>
    <ligand>
        <name>ADP-D-ribose</name>
        <dbReference type="ChEBI" id="CHEBI:57967"/>
    </ligand>
</feature>
<feature type="binding site" evidence="2">
    <location>
        <begin position="31"/>
        <end position="34"/>
    </location>
    <ligand>
        <name>ADP-D-ribose</name>
        <dbReference type="ChEBI" id="CHEBI:57967"/>
    </ligand>
</feature>
<feature type="binding site" evidence="2">
    <location>
        <position position="79"/>
    </location>
    <ligand>
        <name>ADP-D-ribose</name>
        <dbReference type="ChEBI" id="CHEBI:57967"/>
    </ligand>
</feature>
<feature type="binding site" evidence="2">
    <location>
        <begin position="117"/>
        <end position="121"/>
    </location>
    <ligand>
        <name>ADP-D-ribose</name>
        <dbReference type="ChEBI" id="CHEBI:57967"/>
    </ligand>
</feature>